<organism>
    <name type="scientific">Oryza sativa subsp. indica</name>
    <name type="common">Rice</name>
    <dbReference type="NCBI Taxonomy" id="39946"/>
    <lineage>
        <taxon>Eukaryota</taxon>
        <taxon>Viridiplantae</taxon>
        <taxon>Streptophyta</taxon>
        <taxon>Embryophyta</taxon>
        <taxon>Tracheophyta</taxon>
        <taxon>Spermatophyta</taxon>
        <taxon>Magnoliopsida</taxon>
        <taxon>Liliopsida</taxon>
        <taxon>Poales</taxon>
        <taxon>Poaceae</taxon>
        <taxon>BOP clade</taxon>
        <taxon>Oryzoideae</taxon>
        <taxon>Oryzeae</taxon>
        <taxon>Oryzinae</taxon>
        <taxon>Oryza</taxon>
        <taxon>Oryza sativa</taxon>
    </lineage>
</organism>
<evidence type="ECO:0000250" key="1"/>
<evidence type="ECO:0000255" key="2"/>
<evidence type="ECO:0000255" key="3">
    <source>
        <dbReference type="PROSITE-ProRule" id="PRU00823"/>
    </source>
</evidence>
<evidence type="ECO:0000256" key="4">
    <source>
        <dbReference type="SAM" id="MobiDB-lite"/>
    </source>
</evidence>
<evidence type="ECO:0000269" key="5">
    <source>
    </source>
</evidence>
<evidence type="ECO:0000305" key="6"/>
<gene>
    <name type="primary">AKT1</name>
</gene>
<accession>P0C550</accession>
<accession>Q8VYX2</accession>
<comment type="function">
    <text evidence="1">Highly selective inward-rectifying potassium channel that mediates potassium uptake by plant roots.</text>
</comment>
<comment type="subunit">
    <text evidence="1">The potassium channel is probably a homo- or heterotetrameric complex of pore-forming subunits.</text>
</comment>
<comment type="subcellular location">
    <subcellularLocation>
        <location evidence="6">Membrane</location>
        <topology evidence="6">Multi-pass membrane protein</topology>
    </subcellularLocation>
</comment>
<comment type="tissue specificity">
    <text evidence="5">Highly expressed in the epidermis and endodermis of roots, and at lower level in cells of the vasculature and the cortex. Expressed in xylem parenchyma, phloem and mesophyll cells of leaves.</text>
</comment>
<comment type="domain">
    <text evidence="1">The segment S4 is probably the voltage-sensor and is characterized by a series of positively charged amino acids. The pore-forming region H5 is enclosed by the transmembrane segments S5 and S6 in the Shaker-type (1P/6TM) and contains the GYGD signature motif which seems to be involved in potassium selectivity (By similarity).</text>
</comment>
<comment type="domain">
    <text evidence="1">The KHA domain (rich in hydrophobic and acidic residues) present in the C-terminal part is likely to be important for tetramerization.</text>
</comment>
<comment type="similarity">
    <text evidence="6">Belongs to the potassium channel family. Plant (TC 1.A.1.4) subfamily.</text>
</comment>
<reference key="1">
    <citation type="journal article" date="2003" name="Plant Mol. Biol.">
        <title>Salinity stress-tolerant and -sensitive rice (Oryza sativa L.) regulate AKT1-type potassium channel transcripts differently.</title>
        <authorList>
            <person name="Golldack D."/>
            <person name="Quigley F."/>
            <person name="Michalowski C.B."/>
            <person name="Kamasani U.R."/>
            <person name="Bohnert H.J."/>
        </authorList>
    </citation>
    <scope>NUCLEOTIDE SEQUENCE [MRNA] OF 76-935</scope>
    <scope>TISSUE SPECIFICITY</scope>
    <source>
        <strain>cv. IR29</strain>
    </source>
</reference>
<dbReference type="EMBL" id="AY065970">
    <property type="protein sequence ID" value="AAL40894.1"/>
    <property type="molecule type" value="mRNA"/>
</dbReference>
<dbReference type="SMR" id="P0C550"/>
<dbReference type="GO" id="GO:0034702">
    <property type="term" value="C:monoatomic ion channel complex"/>
    <property type="evidence" value="ECO:0007669"/>
    <property type="project" value="UniProtKB-KW"/>
</dbReference>
<dbReference type="GO" id="GO:0005249">
    <property type="term" value="F:voltage-gated potassium channel activity"/>
    <property type="evidence" value="ECO:0007669"/>
    <property type="project" value="InterPro"/>
</dbReference>
<dbReference type="CDD" id="cd00038">
    <property type="entry name" value="CAP_ED"/>
    <property type="match status" value="1"/>
</dbReference>
<dbReference type="FunFam" id="2.60.120.10:FF:000074">
    <property type="entry name" value="Potassium channel KAT2"/>
    <property type="match status" value="1"/>
</dbReference>
<dbReference type="FunFam" id="1.10.287.70:FF:000123">
    <property type="entry name" value="Potassium channel KAT3"/>
    <property type="match status" value="1"/>
</dbReference>
<dbReference type="Gene3D" id="1.10.287.70">
    <property type="match status" value="1"/>
</dbReference>
<dbReference type="Gene3D" id="1.25.40.20">
    <property type="entry name" value="Ankyrin repeat-containing domain"/>
    <property type="match status" value="1"/>
</dbReference>
<dbReference type="Gene3D" id="2.60.120.10">
    <property type="entry name" value="Jelly Rolls"/>
    <property type="match status" value="1"/>
</dbReference>
<dbReference type="InterPro" id="IPR002110">
    <property type="entry name" value="Ankyrin_rpt"/>
</dbReference>
<dbReference type="InterPro" id="IPR036770">
    <property type="entry name" value="Ankyrin_rpt-contain_sf"/>
</dbReference>
<dbReference type="InterPro" id="IPR000595">
    <property type="entry name" value="cNMP-bd_dom"/>
</dbReference>
<dbReference type="InterPro" id="IPR018490">
    <property type="entry name" value="cNMP-bd_dom_sf"/>
</dbReference>
<dbReference type="InterPro" id="IPR005821">
    <property type="entry name" value="Ion_trans_dom"/>
</dbReference>
<dbReference type="InterPro" id="IPR003938">
    <property type="entry name" value="K_chnl_volt-dep_EAG/ELK/ERG"/>
</dbReference>
<dbReference type="InterPro" id="IPR045319">
    <property type="entry name" value="KAT/AKT"/>
</dbReference>
<dbReference type="InterPro" id="IPR021789">
    <property type="entry name" value="KHA_dom"/>
</dbReference>
<dbReference type="InterPro" id="IPR014710">
    <property type="entry name" value="RmlC-like_jellyroll"/>
</dbReference>
<dbReference type="PANTHER" id="PTHR45743">
    <property type="entry name" value="POTASSIUM CHANNEL AKT1"/>
    <property type="match status" value="1"/>
</dbReference>
<dbReference type="PANTHER" id="PTHR45743:SF2">
    <property type="entry name" value="POTASSIUM CHANNEL AKT1"/>
    <property type="match status" value="1"/>
</dbReference>
<dbReference type="Pfam" id="PF12796">
    <property type="entry name" value="Ank_2"/>
    <property type="match status" value="2"/>
</dbReference>
<dbReference type="Pfam" id="PF00027">
    <property type="entry name" value="cNMP_binding"/>
    <property type="match status" value="1"/>
</dbReference>
<dbReference type="Pfam" id="PF00520">
    <property type="entry name" value="Ion_trans"/>
    <property type="match status" value="1"/>
</dbReference>
<dbReference type="Pfam" id="PF11834">
    <property type="entry name" value="KHA"/>
    <property type="match status" value="1"/>
</dbReference>
<dbReference type="PRINTS" id="PR01415">
    <property type="entry name" value="ANKYRIN"/>
</dbReference>
<dbReference type="PRINTS" id="PR01463">
    <property type="entry name" value="EAGCHANLFMLY"/>
</dbReference>
<dbReference type="SMART" id="SM00248">
    <property type="entry name" value="ANK"/>
    <property type="match status" value="5"/>
</dbReference>
<dbReference type="SMART" id="SM00100">
    <property type="entry name" value="cNMP"/>
    <property type="match status" value="1"/>
</dbReference>
<dbReference type="SUPFAM" id="SSF48403">
    <property type="entry name" value="Ankyrin repeat"/>
    <property type="match status" value="1"/>
</dbReference>
<dbReference type="SUPFAM" id="SSF51206">
    <property type="entry name" value="cAMP-binding domain-like"/>
    <property type="match status" value="1"/>
</dbReference>
<dbReference type="SUPFAM" id="SSF81324">
    <property type="entry name" value="Voltage-gated potassium channels"/>
    <property type="match status" value="1"/>
</dbReference>
<dbReference type="PROSITE" id="PS50297">
    <property type="entry name" value="ANK_REP_REGION"/>
    <property type="match status" value="1"/>
</dbReference>
<dbReference type="PROSITE" id="PS50088">
    <property type="entry name" value="ANK_REPEAT"/>
    <property type="match status" value="3"/>
</dbReference>
<dbReference type="PROSITE" id="PS50042">
    <property type="entry name" value="CNMP_BINDING_3"/>
    <property type="match status" value="1"/>
</dbReference>
<dbReference type="PROSITE" id="PS51490">
    <property type="entry name" value="KHA"/>
    <property type="match status" value="1"/>
</dbReference>
<feature type="chain" id="PRO_0000293086" description="Potassium channel AKT1">
    <location>
        <begin position="1"/>
        <end position="935"/>
    </location>
</feature>
<feature type="topological domain" description="Cytoplasmic" evidence="2">
    <location>
        <begin position="1"/>
        <end position="106"/>
    </location>
</feature>
<feature type="transmembrane region" description="Helical; Name=Segment S1" evidence="2">
    <location>
        <begin position="107"/>
        <end position="127"/>
    </location>
</feature>
<feature type="topological domain" description="Extracellular" evidence="2">
    <location>
        <begin position="128"/>
        <end position="136"/>
    </location>
</feature>
<feature type="transmembrane region" description="Helical; Name=Segment S2" evidence="2">
    <location>
        <begin position="137"/>
        <end position="157"/>
    </location>
</feature>
<feature type="topological domain" description="Cytoplasmic" evidence="2">
    <location>
        <begin position="158"/>
        <end position="178"/>
    </location>
</feature>
<feature type="transmembrane region" description="Helical; Name=Segment S3" evidence="2">
    <location>
        <begin position="179"/>
        <end position="199"/>
    </location>
</feature>
<feature type="topological domain" description="Extracellular" evidence="2">
    <location>
        <begin position="200"/>
        <end position="205"/>
    </location>
</feature>
<feature type="transmembrane region" description="Helical; Voltage-sensor; Name=Segment S4" evidence="2">
    <location>
        <begin position="206"/>
        <end position="226"/>
    </location>
</feature>
<feature type="topological domain" description="Cytoplasmic" evidence="2">
    <location>
        <begin position="227"/>
        <end position="240"/>
    </location>
</feature>
<feature type="transmembrane region" description="Helical; Name=Segment S5" evidence="2">
    <location>
        <begin position="241"/>
        <end position="261"/>
    </location>
</feature>
<feature type="topological domain" description="Extracellular" evidence="2">
    <location>
        <begin position="262"/>
        <end position="288"/>
    </location>
</feature>
<feature type="intramembrane region" description="Pore-forming; Name=Segment H5" evidence="2">
    <location>
        <begin position="289"/>
        <end position="308"/>
    </location>
</feature>
<feature type="topological domain" description="Extracellular" evidence="2">
    <location>
        <begin position="309"/>
        <end position="312"/>
    </location>
</feature>
<feature type="transmembrane region" description="Helical; Name=Segment S6" evidence="2">
    <location>
        <begin position="313"/>
        <end position="333"/>
    </location>
</feature>
<feature type="topological domain" description="Cytoplasmic" evidence="2">
    <location>
        <begin position="334"/>
        <end position="935"/>
    </location>
</feature>
<feature type="repeat" description="ANK 1">
    <location>
        <begin position="565"/>
        <end position="594"/>
    </location>
</feature>
<feature type="repeat" description="ANK 2">
    <location>
        <begin position="598"/>
        <end position="627"/>
    </location>
</feature>
<feature type="repeat" description="ANK 3">
    <location>
        <begin position="631"/>
        <end position="660"/>
    </location>
</feature>
<feature type="repeat" description="ANK 4">
    <location>
        <begin position="662"/>
        <end position="691"/>
    </location>
</feature>
<feature type="repeat" description="ANK 5">
    <location>
        <begin position="695"/>
        <end position="724"/>
    </location>
</feature>
<feature type="repeat" description="ANK 6">
    <location>
        <begin position="728"/>
        <end position="757"/>
    </location>
</feature>
<feature type="domain" description="KHA" evidence="3">
    <location>
        <begin position="859"/>
        <end position="935"/>
    </location>
</feature>
<feature type="region of interest" description="Disordered" evidence="4">
    <location>
        <begin position="826"/>
        <end position="854"/>
    </location>
</feature>
<feature type="compositionally biased region" description="Polar residues" evidence="4">
    <location>
        <begin position="845"/>
        <end position="854"/>
    </location>
</feature>
<feature type="binding site">
    <location>
        <begin position="419"/>
        <end position="538"/>
    </location>
    <ligand>
        <name>a nucleoside 3',5'-cyclic phosphate</name>
        <dbReference type="ChEBI" id="CHEBI:58464"/>
    </ligand>
</feature>
<sequence length="935" mass="104465">MARWGAARMAACGPWGRNRRVGAGDAFEASEVRRDGRSRMMPACGPWGAGHGGGDPALERELSRDGSHYSISSAILPSLGARSNRRIKLRRFIISPYDRRYRIWETFLIVLVVYSAWVSPFEFGFIPKPTGALATADNVVNAFFAVDIILTFFVAYLDKMSYMLEDDPKKIAWRYSTTWLVLDVASTIPSEFARRILPSKLRSYGFFNMLRLWRLRRVSSLFSRLEKDRHFNYFWVRCAKLICVTLFAVHCAACFYYLLADRYPVPTSTWIGNYMADFHERSLWIRYVTSVYWSITTLTTVGYGDLHAENTREMIFNIFYMLFNLGLTAYLIGNMTNLVVHGTSRTRNYRDTIQAATSFGVRNQLPPRLQDQMISHISLKYRTDSEGLQQQEILDSLPKAIKSSISQYLFFHLVQNVYLFQGVSNDLIFQLVSEMKAEYFPPREDVILQNEAPTDFYILVSGSVELVEQQNGADQVIQVATSGEVVGEIGVLCYRPQLFTVRTRSLCQLLRLNRTAFLSIVQSNVGDGTIIMNNLIQFLKEQKENSVMAGVVKEIESMLARGNLDLPITLCFAVTRGDDFLLHQLLKRGMDPNESDNDGHTALHIAASKGNEQCVRLLLEYGADPNARDSEGKVPLWEALCEKHAAVVQLLVEGGADLSSGDTGLYACIAVEESDTELLNDIIHYGGDVNRARRDGTTALHRAVCDGNVQMAELLLEHGADIDKQDGNGWTPRALAEQQGHDDIQLLFRSRKAATASGHHHVPSSTTTRVAPAAAAASLIGRFNSEPMMKNMIHEDADLPSRVLPEKLRRKRVTFQNSLFGVISSSQAQRETDHPLSRGGLAATGSPNPSSGSRNAVIRVTISCPEKGNTAGKLVLLPQTLDMLLELGAKKFDFAPTKVLTVEGAEVDEVELIRDGDHLVLVSDEWDAEKMKGKS</sequence>
<protein>
    <recommendedName>
        <fullName>Potassium channel AKT1</fullName>
        <shortName>OsAKT1</shortName>
    </recommendedName>
</protein>
<name>AKT1_ORYSI</name>
<proteinExistence type="evidence at transcript level"/>
<keyword id="KW-0040">ANK repeat</keyword>
<keyword id="KW-0407">Ion channel</keyword>
<keyword id="KW-0406">Ion transport</keyword>
<keyword id="KW-0472">Membrane</keyword>
<keyword id="KW-0630">Potassium</keyword>
<keyword id="KW-0631">Potassium channel</keyword>
<keyword id="KW-0633">Potassium transport</keyword>
<keyword id="KW-0677">Repeat</keyword>
<keyword id="KW-0812">Transmembrane</keyword>
<keyword id="KW-1133">Transmembrane helix</keyword>
<keyword id="KW-0813">Transport</keyword>
<keyword id="KW-0851">Voltage-gated channel</keyword>